<comment type="function">
    <text evidence="1">Converts 2-succinyl-6-hydroxy-2,4-cyclohexadiene-1-carboxylate (SHCHC) to 2-succinylbenzoate (OSB).</text>
</comment>
<comment type="catalytic activity">
    <reaction evidence="1">
        <text>(1R,6R)-6-hydroxy-2-succinyl-cyclohexa-2,4-diene-1-carboxylate = 2-succinylbenzoate + H2O</text>
        <dbReference type="Rhea" id="RHEA:10196"/>
        <dbReference type="ChEBI" id="CHEBI:15377"/>
        <dbReference type="ChEBI" id="CHEBI:18325"/>
        <dbReference type="ChEBI" id="CHEBI:58689"/>
        <dbReference type="EC" id="4.2.1.113"/>
    </reaction>
</comment>
<comment type="cofactor">
    <cofactor evidence="1">
        <name>a divalent metal cation</name>
        <dbReference type="ChEBI" id="CHEBI:60240"/>
    </cofactor>
</comment>
<comment type="pathway">
    <text evidence="1">Quinol/quinone metabolism; 1,4-dihydroxy-2-naphthoate biosynthesis; 1,4-dihydroxy-2-naphthoate from chorismate: step 4/7.</text>
</comment>
<comment type="pathway">
    <text evidence="1">Quinol/quinone metabolism; menaquinone biosynthesis.</text>
</comment>
<comment type="similarity">
    <text evidence="1">Belongs to the mandelate racemase/muconate lactonizing enzyme family. MenC type 1 subfamily.</text>
</comment>
<sequence length="323" mass="35298">MRTATLYRYSVPMEAGVILRHQRLKSRDGLLVKLQQGELSGWGEIAPLPEFSQETLDQAQVAAECWLQHWVSGVESDDSVLPSVAFGLSCAQAELKQTLPLSADYRKAPLCTGDPDELFAVLQALPGEKVAKVKVGLYEAVRDGMIVNVLLEALPDLTLRLDANRSWSRAKADGFAKYVNPALRSRIAFLEEPCKTRAESREFAQDTGIAIAWDESVREADFQVEAEPGVAAIVIKPTLVGSLARCQQLVQQAHQAGLVAVISSSIESSLGLTQLARLAAWLTPVTVPGLDTLDLMQAQVVRPWPDSPLPLITTEQLGVVWHR</sequence>
<protein>
    <recommendedName>
        <fullName evidence="1">o-succinylbenzoate synthase</fullName>
        <shortName evidence="1">OSB synthase</shortName>
        <shortName evidence="1">OSBS</shortName>
        <ecNumber evidence="1">4.2.1.113</ecNumber>
    </recommendedName>
    <alternativeName>
        <fullName evidence="1">4-(2'-carboxyphenyl)-4-oxybutyric acid synthase</fullName>
    </alternativeName>
    <alternativeName>
        <fullName evidence="1">o-succinylbenzoic acid synthase</fullName>
    </alternativeName>
</protein>
<accession>P58487</accession>
<accession>Q0WE02</accession>
<organism>
    <name type="scientific">Yersinia pestis</name>
    <dbReference type="NCBI Taxonomy" id="632"/>
    <lineage>
        <taxon>Bacteria</taxon>
        <taxon>Pseudomonadati</taxon>
        <taxon>Pseudomonadota</taxon>
        <taxon>Gammaproteobacteria</taxon>
        <taxon>Enterobacterales</taxon>
        <taxon>Yersiniaceae</taxon>
        <taxon>Yersinia</taxon>
    </lineage>
</organism>
<name>MENC_YERPE</name>
<feature type="chain" id="PRO_0000171277" description="o-succinylbenzoate synthase">
    <location>
        <begin position="1"/>
        <end position="323"/>
    </location>
</feature>
<feature type="active site" description="Proton donor" evidence="1">
    <location>
        <position position="134"/>
    </location>
</feature>
<feature type="active site" description="Proton acceptor" evidence="1">
    <location>
        <position position="236"/>
    </location>
</feature>
<feature type="binding site" evidence="1">
    <location>
        <position position="162"/>
    </location>
    <ligand>
        <name>Mg(2+)</name>
        <dbReference type="ChEBI" id="CHEBI:18420"/>
    </ligand>
</feature>
<feature type="binding site" evidence="1">
    <location>
        <position position="191"/>
    </location>
    <ligand>
        <name>Mg(2+)</name>
        <dbReference type="ChEBI" id="CHEBI:18420"/>
    </ligand>
</feature>
<feature type="binding site" evidence="1">
    <location>
        <position position="214"/>
    </location>
    <ligand>
        <name>Mg(2+)</name>
        <dbReference type="ChEBI" id="CHEBI:18420"/>
    </ligand>
</feature>
<dbReference type="EC" id="4.2.1.113" evidence="1"/>
<dbReference type="EMBL" id="AL590842">
    <property type="protein sequence ID" value="CAL21150.1"/>
    <property type="molecule type" value="Genomic_DNA"/>
</dbReference>
<dbReference type="EMBL" id="AE009952">
    <property type="protein sequence ID" value="AAM85232.1"/>
    <property type="molecule type" value="Genomic_DNA"/>
</dbReference>
<dbReference type="EMBL" id="AE017042">
    <property type="protein sequence ID" value="AAS62541.1"/>
    <property type="molecule type" value="Genomic_DNA"/>
</dbReference>
<dbReference type="PIR" id="AC0308">
    <property type="entry name" value="AC0308"/>
</dbReference>
<dbReference type="RefSeq" id="WP_002210244.1">
    <property type="nucleotide sequence ID" value="NZ_WUCM01000021.1"/>
</dbReference>
<dbReference type="RefSeq" id="YP_002347486.1">
    <property type="nucleotide sequence ID" value="NC_003143.1"/>
</dbReference>
<dbReference type="SMR" id="P58487"/>
<dbReference type="STRING" id="214092.YPO2524"/>
<dbReference type="PaxDb" id="214092-YPO2524"/>
<dbReference type="EnsemblBacteria" id="AAS62541">
    <property type="protein sequence ID" value="AAS62541"/>
    <property type="gene ID" value="YP_2335"/>
</dbReference>
<dbReference type="GeneID" id="57976163"/>
<dbReference type="KEGG" id="ype:YPO2524"/>
<dbReference type="KEGG" id="ypk:y1663"/>
<dbReference type="KEGG" id="ypm:YP_2335"/>
<dbReference type="PATRIC" id="fig|214092.21.peg.2942"/>
<dbReference type="eggNOG" id="COG1441">
    <property type="taxonomic scope" value="Bacteria"/>
</dbReference>
<dbReference type="HOGENOM" id="CLU_030273_0_1_6"/>
<dbReference type="OMA" id="PLCYGDP"/>
<dbReference type="OrthoDB" id="3725747at2"/>
<dbReference type="UniPathway" id="UPA00079"/>
<dbReference type="UniPathway" id="UPA01057">
    <property type="reaction ID" value="UER00165"/>
</dbReference>
<dbReference type="Proteomes" id="UP000000815">
    <property type="component" value="Chromosome"/>
</dbReference>
<dbReference type="Proteomes" id="UP000001019">
    <property type="component" value="Chromosome"/>
</dbReference>
<dbReference type="Proteomes" id="UP000002490">
    <property type="component" value="Chromosome"/>
</dbReference>
<dbReference type="GO" id="GO:0016836">
    <property type="term" value="F:hydro-lyase activity"/>
    <property type="evidence" value="ECO:0000318"/>
    <property type="project" value="GO_Central"/>
</dbReference>
<dbReference type="GO" id="GO:0000287">
    <property type="term" value="F:magnesium ion binding"/>
    <property type="evidence" value="ECO:0007669"/>
    <property type="project" value="UniProtKB-UniRule"/>
</dbReference>
<dbReference type="GO" id="GO:0043748">
    <property type="term" value="F:O-succinylbenzoate synthase activity"/>
    <property type="evidence" value="ECO:0007669"/>
    <property type="project" value="UniProtKB-EC"/>
</dbReference>
<dbReference type="GO" id="GO:0009234">
    <property type="term" value="P:menaquinone biosynthetic process"/>
    <property type="evidence" value="ECO:0000318"/>
    <property type="project" value="GO_Central"/>
</dbReference>
<dbReference type="CDD" id="cd03320">
    <property type="entry name" value="OSBS"/>
    <property type="match status" value="1"/>
</dbReference>
<dbReference type="Gene3D" id="3.20.20.120">
    <property type="entry name" value="Enolase-like C-terminal domain"/>
    <property type="match status" value="1"/>
</dbReference>
<dbReference type="Gene3D" id="3.30.390.10">
    <property type="entry name" value="Enolase-like, N-terminal domain"/>
    <property type="match status" value="1"/>
</dbReference>
<dbReference type="HAMAP" id="MF_00470">
    <property type="entry name" value="MenC_1"/>
    <property type="match status" value="1"/>
</dbReference>
<dbReference type="InterPro" id="IPR036849">
    <property type="entry name" value="Enolase-like_C_sf"/>
</dbReference>
<dbReference type="InterPro" id="IPR029017">
    <property type="entry name" value="Enolase-like_N"/>
</dbReference>
<dbReference type="InterPro" id="IPR029065">
    <property type="entry name" value="Enolase_C-like"/>
</dbReference>
<dbReference type="InterPro" id="IPR013342">
    <property type="entry name" value="Mandelate_racemase_C"/>
</dbReference>
<dbReference type="InterPro" id="IPR010196">
    <property type="entry name" value="OSB_synthase_MenC1"/>
</dbReference>
<dbReference type="InterPro" id="IPR041338">
    <property type="entry name" value="OSBS_N"/>
</dbReference>
<dbReference type="NCBIfam" id="TIGR01927">
    <property type="entry name" value="menC_gam_Gplu"/>
    <property type="match status" value="1"/>
</dbReference>
<dbReference type="NCBIfam" id="NF003473">
    <property type="entry name" value="PRK05105.1"/>
    <property type="match status" value="1"/>
</dbReference>
<dbReference type="PANTHER" id="PTHR48073:SF2">
    <property type="entry name" value="O-SUCCINYLBENZOATE SYNTHASE"/>
    <property type="match status" value="1"/>
</dbReference>
<dbReference type="PANTHER" id="PTHR48073">
    <property type="entry name" value="O-SUCCINYLBENZOATE SYNTHASE-RELATED"/>
    <property type="match status" value="1"/>
</dbReference>
<dbReference type="Pfam" id="PF21508">
    <property type="entry name" value="MenC_N"/>
    <property type="match status" value="1"/>
</dbReference>
<dbReference type="Pfam" id="PF13378">
    <property type="entry name" value="MR_MLE_C"/>
    <property type="match status" value="1"/>
</dbReference>
<dbReference type="SFLD" id="SFLDS00001">
    <property type="entry name" value="Enolase"/>
    <property type="match status" value="1"/>
</dbReference>
<dbReference type="SFLD" id="SFLDF00009">
    <property type="entry name" value="o-succinylbenzoate_synthase"/>
    <property type="match status" value="1"/>
</dbReference>
<dbReference type="SMART" id="SM00922">
    <property type="entry name" value="MR_MLE"/>
    <property type="match status" value="1"/>
</dbReference>
<dbReference type="SUPFAM" id="SSF51604">
    <property type="entry name" value="Enolase C-terminal domain-like"/>
    <property type="match status" value="1"/>
</dbReference>
<dbReference type="SUPFAM" id="SSF54826">
    <property type="entry name" value="Enolase N-terminal domain-like"/>
    <property type="match status" value="1"/>
</dbReference>
<keyword id="KW-0456">Lyase</keyword>
<keyword id="KW-0460">Magnesium</keyword>
<keyword id="KW-0474">Menaquinone biosynthesis</keyword>
<keyword id="KW-0479">Metal-binding</keyword>
<keyword id="KW-1185">Reference proteome</keyword>
<evidence type="ECO:0000255" key="1">
    <source>
        <dbReference type="HAMAP-Rule" id="MF_00470"/>
    </source>
</evidence>
<proteinExistence type="inferred from homology"/>
<reference key="1">
    <citation type="journal article" date="2001" name="Nature">
        <title>Genome sequence of Yersinia pestis, the causative agent of plague.</title>
        <authorList>
            <person name="Parkhill J."/>
            <person name="Wren B.W."/>
            <person name="Thomson N.R."/>
            <person name="Titball R.W."/>
            <person name="Holden M.T.G."/>
            <person name="Prentice M.B."/>
            <person name="Sebaihia M."/>
            <person name="James K.D."/>
            <person name="Churcher C.M."/>
            <person name="Mungall K.L."/>
            <person name="Baker S."/>
            <person name="Basham D."/>
            <person name="Bentley S.D."/>
            <person name="Brooks K."/>
            <person name="Cerdeno-Tarraga A.-M."/>
            <person name="Chillingworth T."/>
            <person name="Cronin A."/>
            <person name="Davies R.M."/>
            <person name="Davis P."/>
            <person name="Dougan G."/>
            <person name="Feltwell T."/>
            <person name="Hamlin N."/>
            <person name="Holroyd S."/>
            <person name="Jagels K."/>
            <person name="Karlyshev A.V."/>
            <person name="Leather S."/>
            <person name="Moule S."/>
            <person name="Oyston P.C.F."/>
            <person name="Quail M.A."/>
            <person name="Rutherford K.M."/>
            <person name="Simmonds M."/>
            <person name="Skelton J."/>
            <person name="Stevens K."/>
            <person name="Whitehead S."/>
            <person name="Barrell B.G."/>
        </authorList>
    </citation>
    <scope>NUCLEOTIDE SEQUENCE [LARGE SCALE GENOMIC DNA]</scope>
    <source>
        <strain>CO-92 / Biovar Orientalis</strain>
    </source>
</reference>
<reference key="2">
    <citation type="journal article" date="2002" name="J. Bacteriol.">
        <title>Genome sequence of Yersinia pestis KIM.</title>
        <authorList>
            <person name="Deng W."/>
            <person name="Burland V."/>
            <person name="Plunkett G. III"/>
            <person name="Boutin A."/>
            <person name="Mayhew G.F."/>
            <person name="Liss P."/>
            <person name="Perna N.T."/>
            <person name="Rose D.J."/>
            <person name="Mau B."/>
            <person name="Zhou S."/>
            <person name="Schwartz D.C."/>
            <person name="Fetherston J.D."/>
            <person name="Lindler L.E."/>
            <person name="Brubaker R.R."/>
            <person name="Plano G.V."/>
            <person name="Straley S.C."/>
            <person name="McDonough K.A."/>
            <person name="Nilles M.L."/>
            <person name="Matson J.S."/>
            <person name="Blattner F.R."/>
            <person name="Perry R.D."/>
        </authorList>
    </citation>
    <scope>NUCLEOTIDE SEQUENCE [LARGE SCALE GENOMIC DNA]</scope>
    <source>
        <strain>KIM10+ / Biovar Mediaevalis</strain>
    </source>
</reference>
<reference key="3">
    <citation type="journal article" date="2004" name="DNA Res.">
        <title>Complete genome sequence of Yersinia pestis strain 91001, an isolate avirulent to humans.</title>
        <authorList>
            <person name="Song Y."/>
            <person name="Tong Z."/>
            <person name="Wang J."/>
            <person name="Wang L."/>
            <person name="Guo Z."/>
            <person name="Han Y."/>
            <person name="Zhang J."/>
            <person name="Pei D."/>
            <person name="Zhou D."/>
            <person name="Qin H."/>
            <person name="Pang X."/>
            <person name="Han Y."/>
            <person name="Zhai J."/>
            <person name="Li M."/>
            <person name="Cui B."/>
            <person name="Qi Z."/>
            <person name="Jin L."/>
            <person name="Dai R."/>
            <person name="Chen F."/>
            <person name="Li S."/>
            <person name="Ye C."/>
            <person name="Du Z."/>
            <person name="Lin W."/>
            <person name="Wang J."/>
            <person name="Yu J."/>
            <person name="Yang H."/>
            <person name="Wang J."/>
            <person name="Huang P."/>
            <person name="Yang R."/>
        </authorList>
    </citation>
    <scope>NUCLEOTIDE SEQUENCE [LARGE SCALE GENOMIC DNA]</scope>
    <source>
        <strain>91001 / Biovar Mediaevalis</strain>
    </source>
</reference>
<gene>
    <name evidence="1" type="primary">menC</name>
    <name type="ordered locus">YPO2524</name>
    <name type="ordered locus">y1663</name>
    <name type="ordered locus">YP_2335</name>
</gene>